<accession>C1CMQ8</accession>
<comment type="function">
    <text evidence="1">DNA-dependent RNA polymerase catalyzes the transcription of DNA into RNA using the four ribonucleoside triphosphates as substrates.</text>
</comment>
<comment type="catalytic activity">
    <reaction evidence="1">
        <text>RNA(n) + a ribonucleoside 5'-triphosphate = RNA(n+1) + diphosphate</text>
        <dbReference type="Rhea" id="RHEA:21248"/>
        <dbReference type="Rhea" id="RHEA-COMP:14527"/>
        <dbReference type="Rhea" id="RHEA-COMP:17342"/>
        <dbReference type="ChEBI" id="CHEBI:33019"/>
        <dbReference type="ChEBI" id="CHEBI:61557"/>
        <dbReference type="ChEBI" id="CHEBI:140395"/>
        <dbReference type="EC" id="2.7.7.6"/>
    </reaction>
</comment>
<comment type="subunit">
    <text evidence="1">The RNAP catalytic core consists of 2 alpha, 1 beta, 1 beta' and 1 omega subunit. When a sigma factor is associated with the core the holoenzyme is formed, which can initiate transcription.</text>
</comment>
<comment type="similarity">
    <text evidence="1">Belongs to the RNA polymerase beta chain family.</text>
</comment>
<feature type="chain" id="PRO_1000165828" description="DNA-directed RNA polymerase subunit beta">
    <location>
        <begin position="1"/>
        <end position="1203"/>
    </location>
</feature>
<feature type="region of interest" description="Disordered" evidence="2">
    <location>
        <begin position="1174"/>
        <end position="1203"/>
    </location>
</feature>
<feature type="compositionally biased region" description="Basic and acidic residues" evidence="2">
    <location>
        <begin position="1174"/>
        <end position="1195"/>
    </location>
</feature>
<keyword id="KW-0240">DNA-directed RNA polymerase</keyword>
<keyword id="KW-0548">Nucleotidyltransferase</keyword>
<keyword id="KW-0804">Transcription</keyword>
<keyword id="KW-0808">Transferase</keyword>
<organism>
    <name type="scientific">Streptococcus pneumoniae (strain P1031)</name>
    <dbReference type="NCBI Taxonomy" id="488223"/>
    <lineage>
        <taxon>Bacteria</taxon>
        <taxon>Bacillati</taxon>
        <taxon>Bacillota</taxon>
        <taxon>Bacilli</taxon>
        <taxon>Lactobacillales</taxon>
        <taxon>Streptococcaceae</taxon>
        <taxon>Streptococcus</taxon>
    </lineage>
</organism>
<sequence>MAGHDVQYGKHRTRRSFSRIKEVLDLPNLIEIQTDSFKAFLDHGLKEVFEDVLPISNFTDTMELEFVGYEIKEPKYTLEEARIHDASYSAPIFVTFRLINKETGEIKTQEVFFGDFPIMTEMGTFIINGGERIIVSQLVRSPGVYFNDKVDKNGKVGYGSTVIPNRGAWLELESDSKDITYTRIDRTRKIPFTTLVRALGFSGDDEIFDIFGDSELVRNTVEKDIHKNPMDSRTDEALKEIYERLRPGEPKTAESSRSLLVARFFDPRRYDLAAVGRYKINKKLNVKTRLLNQTIAEPLVDPETGEILVEAGTIMTRSVIESIESHLDGDLNKIVYIPNDAAVVTEPVVLQKFKVVAPTDPDRVVTIIGNANPDDKVRTVTPADILAEMSYFLNLAEGLGRVDDIDHLGNRRIRAVGELLANQVRLGLSRMERNVRERMSVQDNEVLTPQQIINIRPVTAAVKEFFGSSQLSQFMDQHNPLSELSHKRRLSALGPGGLTRDRAGYEVRDVHYTHYGRMCPIETPEGPNIGLINNLSSYGHLNKYGFVQTPYRKVDRETGVVTNEIVWLTADEEDEYTVAQANSRLNEDGTFAEKIVMGRHQGVNQEYPANIVDYMDVSPKQVVAVATACIPFLENDDSNRALMGANMQRQAVPLINPQAPYVGTGMEYQAAHDSGAAVIAQYDGKVTYADADKVEVRREDGSLDVYHIQKFRRSNSGTAYNQRTLVKVGDVVEKGDFIADGPSMENGEMALGQNPIVAYMTWEGYNFEDAVIMSERLVKDDVYTSVHLEEYESETRDTKLGPEEITREIPNVGEDALKDLDEMGIIRIGAEVKEGDILVGKVTPKGEKDLSAEERLLHAIFGDKSREVRDTSLRVPHGADGVVRDVKIFTRVNGDELQSGVNMLVRVYIAQKRKIKVGDKMAGRHGNKGVVSRIVPVEDMPYLPDGTPVDIMLNPLGVPSRMNIGQVMELHLGMAARTLGIHIATPVFDGASSEDLWSTVKEAGMDSDAKTILYDGRTGEPFDNRVSVGVMYMIKLHHMVDDKLHARSVGPYSTVTQQPLGGKAQFGGQRFGEMEVWALEAYGASNVLQEILTYKSDDINGRLKAYEAITKGKPIPKPGVPESFRVLVKELQSLGLDMRVLDEDDQEVELRDLDEGMDEDVIHVDDLEKAREKAAQEAKAAFEAEEAEKATKAEATEEAAEQE</sequence>
<proteinExistence type="inferred from homology"/>
<dbReference type="EC" id="2.7.7.6" evidence="1"/>
<dbReference type="EMBL" id="CP000920">
    <property type="protein sequence ID" value="ACO21876.1"/>
    <property type="molecule type" value="Genomic_DNA"/>
</dbReference>
<dbReference type="RefSeq" id="WP_000907145.1">
    <property type="nucleotide sequence ID" value="NC_012467.1"/>
</dbReference>
<dbReference type="SMR" id="C1CMQ8"/>
<dbReference type="GeneID" id="45652826"/>
<dbReference type="KEGG" id="spp:SPP_1981"/>
<dbReference type="HOGENOM" id="CLU_000524_4_1_9"/>
<dbReference type="GO" id="GO:0000428">
    <property type="term" value="C:DNA-directed RNA polymerase complex"/>
    <property type="evidence" value="ECO:0007669"/>
    <property type="project" value="UniProtKB-KW"/>
</dbReference>
<dbReference type="GO" id="GO:0003677">
    <property type="term" value="F:DNA binding"/>
    <property type="evidence" value="ECO:0007669"/>
    <property type="project" value="UniProtKB-UniRule"/>
</dbReference>
<dbReference type="GO" id="GO:0003899">
    <property type="term" value="F:DNA-directed RNA polymerase activity"/>
    <property type="evidence" value="ECO:0007669"/>
    <property type="project" value="UniProtKB-UniRule"/>
</dbReference>
<dbReference type="GO" id="GO:0032549">
    <property type="term" value="F:ribonucleoside binding"/>
    <property type="evidence" value="ECO:0007669"/>
    <property type="project" value="InterPro"/>
</dbReference>
<dbReference type="GO" id="GO:0006351">
    <property type="term" value="P:DNA-templated transcription"/>
    <property type="evidence" value="ECO:0007669"/>
    <property type="project" value="UniProtKB-UniRule"/>
</dbReference>
<dbReference type="CDD" id="cd00653">
    <property type="entry name" value="RNA_pol_B_RPB2"/>
    <property type="match status" value="1"/>
</dbReference>
<dbReference type="Gene3D" id="2.40.50.100">
    <property type="match status" value="1"/>
</dbReference>
<dbReference type="Gene3D" id="2.40.50.150">
    <property type="match status" value="1"/>
</dbReference>
<dbReference type="Gene3D" id="3.90.1100.10">
    <property type="match status" value="2"/>
</dbReference>
<dbReference type="Gene3D" id="2.30.150.10">
    <property type="entry name" value="DNA-directed RNA polymerase, beta subunit, external 1 domain"/>
    <property type="match status" value="1"/>
</dbReference>
<dbReference type="Gene3D" id="2.40.270.10">
    <property type="entry name" value="DNA-directed RNA polymerase, subunit 2, domain 6"/>
    <property type="match status" value="1"/>
</dbReference>
<dbReference type="Gene3D" id="3.90.1800.10">
    <property type="entry name" value="RNA polymerase alpha subunit dimerisation domain"/>
    <property type="match status" value="1"/>
</dbReference>
<dbReference type="Gene3D" id="3.90.1110.10">
    <property type="entry name" value="RNA polymerase Rpb2, domain 2"/>
    <property type="match status" value="1"/>
</dbReference>
<dbReference type="HAMAP" id="MF_01321">
    <property type="entry name" value="RNApol_bact_RpoB"/>
    <property type="match status" value="1"/>
</dbReference>
<dbReference type="InterPro" id="IPR042107">
    <property type="entry name" value="DNA-dir_RNA_pol_bsu_ext_1_sf"/>
</dbReference>
<dbReference type="InterPro" id="IPR019462">
    <property type="entry name" value="DNA-dir_RNA_pol_bsu_external_1"/>
</dbReference>
<dbReference type="InterPro" id="IPR015712">
    <property type="entry name" value="DNA-dir_RNA_pol_su2"/>
</dbReference>
<dbReference type="InterPro" id="IPR007120">
    <property type="entry name" value="DNA-dir_RNAP_su2_dom"/>
</dbReference>
<dbReference type="InterPro" id="IPR037033">
    <property type="entry name" value="DNA-dir_RNAP_su2_hyb_sf"/>
</dbReference>
<dbReference type="InterPro" id="IPR010243">
    <property type="entry name" value="RNA_pol_bsu_bac"/>
</dbReference>
<dbReference type="InterPro" id="IPR007121">
    <property type="entry name" value="RNA_pol_bsu_CS"/>
</dbReference>
<dbReference type="InterPro" id="IPR007644">
    <property type="entry name" value="RNA_pol_bsu_protrusion"/>
</dbReference>
<dbReference type="InterPro" id="IPR007642">
    <property type="entry name" value="RNA_pol_Rpb2_2"/>
</dbReference>
<dbReference type="InterPro" id="IPR037034">
    <property type="entry name" value="RNA_pol_Rpb2_2_sf"/>
</dbReference>
<dbReference type="InterPro" id="IPR007645">
    <property type="entry name" value="RNA_pol_Rpb2_3"/>
</dbReference>
<dbReference type="InterPro" id="IPR007641">
    <property type="entry name" value="RNA_pol_Rpb2_7"/>
</dbReference>
<dbReference type="InterPro" id="IPR014724">
    <property type="entry name" value="RNA_pol_RPB2_OB-fold"/>
</dbReference>
<dbReference type="NCBIfam" id="NF001616">
    <property type="entry name" value="PRK00405.1"/>
    <property type="match status" value="1"/>
</dbReference>
<dbReference type="NCBIfam" id="TIGR02013">
    <property type="entry name" value="rpoB"/>
    <property type="match status" value="1"/>
</dbReference>
<dbReference type="PANTHER" id="PTHR20856">
    <property type="entry name" value="DNA-DIRECTED RNA POLYMERASE I SUBUNIT 2"/>
    <property type="match status" value="1"/>
</dbReference>
<dbReference type="Pfam" id="PF04563">
    <property type="entry name" value="RNA_pol_Rpb2_1"/>
    <property type="match status" value="1"/>
</dbReference>
<dbReference type="Pfam" id="PF04561">
    <property type="entry name" value="RNA_pol_Rpb2_2"/>
    <property type="match status" value="2"/>
</dbReference>
<dbReference type="Pfam" id="PF04565">
    <property type="entry name" value="RNA_pol_Rpb2_3"/>
    <property type="match status" value="1"/>
</dbReference>
<dbReference type="Pfam" id="PF10385">
    <property type="entry name" value="RNA_pol_Rpb2_45"/>
    <property type="match status" value="1"/>
</dbReference>
<dbReference type="Pfam" id="PF00562">
    <property type="entry name" value="RNA_pol_Rpb2_6"/>
    <property type="match status" value="1"/>
</dbReference>
<dbReference type="Pfam" id="PF04560">
    <property type="entry name" value="RNA_pol_Rpb2_7"/>
    <property type="match status" value="1"/>
</dbReference>
<dbReference type="SUPFAM" id="SSF64484">
    <property type="entry name" value="beta and beta-prime subunits of DNA dependent RNA-polymerase"/>
    <property type="match status" value="1"/>
</dbReference>
<dbReference type="PROSITE" id="PS01166">
    <property type="entry name" value="RNA_POL_BETA"/>
    <property type="match status" value="1"/>
</dbReference>
<protein>
    <recommendedName>
        <fullName evidence="1">DNA-directed RNA polymerase subunit beta</fullName>
        <shortName evidence="1">RNAP subunit beta</shortName>
        <ecNumber evidence="1">2.7.7.6</ecNumber>
    </recommendedName>
    <alternativeName>
        <fullName evidence="1">RNA polymerase subunit beta</fullName>
    </alternativeName>
    <alternativeName>
        <fullName evidence="1">Transcriptase subunit beta</fullName>
    </alternativeName>
</protein>
<name>RPOB_STRZP</name>
<gene>
    <name evidence="1" type="primary">rpoB</name>
    <name type="ordered locus">SPP_1981</name>
</gene>
<reference key="1">
    <citation type="journal article" date="2010" name="Genome Biol.">
        <title>Structure and dynamics of the pan-genome of Streptococcus pneumoniae and closely related species.</title>
        <authorList>
            <person name="Donati C."/>
            <person name="Hiller N.L."/>
            <person name="Tettelin H."/>
            <person name="Muzzi A."/>
            <person name="Croucher N.J."/>
            <person name="Angiuoli S.V."/>
            <person name="Oggioni M."/>
            <person name="Dunning Hotopp J.C."/>
            <person name="Hu F.Z."/>
            <person name="Riley D.R."/>
            <person name="Covacci A."/>
            <person name="Mitchell T.J."/>
            <person name="Bentley S.D."/>
            <person name="Kilian M."/>
            <person name="Ehrlich G.D."/>
            <person name="Rappuoli R."/>
            <person name="Moxon E.R."/>
            <person name="Masignani V."/>
        </authorList>
    </citation>
    <scope>NUCLEOTIDE SEQUENCE [LARGE SCALE GENOMIC DNA]</scope>
    <source>
        <strain>P1031</strain>
    </source>
</reference>
<evidence type="ECO:0000255" key="1">
    <source>
        <dbReference type="HAMAP-Rule" id="MF_01321"/>
    </source>
</evidence>
<evidence type="ECO:0000256" key="2">
    <source>
        <dbReference type="SAM" id="MobiDB-lite"/>
    </source>
</evidence>